<name>RNH2_SHEAM</name>
<sequence>MAVYKNLSPEQTVLLQQGRVAGVDEVGRGPLVGDVVTAAVILDPNKPIAGLNDSKKLTEKKRDALYLEIMDKALAVSVGRASPTEIDELNILHATMLAMQRAVAGLTIVPESVLVDGNRTPDFGVPAHAVVKGDGLIAAISAASVIAKVTRDREMGELDARYPQYGFAGHKGYPTKAHFEAISAHGVLAEHRRSFRPVREWLEANS</sequence>
<accession>A1S4Q4</accession>
<proteinExistence type="inferred from homology"/>
<organism>
    <name type="scientific">Shewanella amazonensis (strain ATCC BAA-1098 / SB2B)</name>
    <dbReference type="NCBI Taxonomy" id="326297"/>
    <lineage>
        <taxon>Bacteria</taxon>
        <taxon>Pseudomonadati</taxon>
        <taxon>Pseudomonadota</taxon>
        <taxon>Gammaproteobacteria</taxon>
        <taxon>Alteromonadales</taxon>
        <taxon>Shewanellaceae</taxon>
        <taxon>Shewanella</taxon>
    </lineage>
</organism>
<protein>
    <recommendedName>
        <fullName evidence="1">Ribonuclease HII</fullName>
        <shortName evidence="1">RNase HII</shortName>
        <ecNumber evidence="1">3.1.26.4</ecNumber>
    </recommendedName>
</protein>
<comment type="function">
    <text evidence="1">Endonuclease that specifically degrades the RNA of RNA-DNA hybrids.</text>
</comment>
<comment type="catalytic activity">
    <reaction evidence="1">
        <text>Endonucleolytic cleavage to 5'-phosphomonoester.</text>
        <dbReference type="EC" id="3.1.26.4"/>
    </reaction>
</comment>
<comment type="cofactor">
    <cofactor evidence="1">
        <name>Mn(2+)</name>
        <dbReference type="ChEBI" id="CHEBI:29035"/>
    </cofactor>
    <cofactor evidence="1">
        <name>Mg(2+)</name>
        <dbReference type="ChEBI" id="CHEBI:18420"/>
    </cofactor>
    <text evidence="1">Manganese or magnesium. Binds 1 divalent metal ion per monomer in the absence of substrate. May bind a second metal ion after substrate binding.</text>
</comment>
<comment type="subcellular location">
    <subcellularLocation>
        <location evidence="1">Cytoplasm</location>
    </subcellularLocation>
</comment>
<comment type="similarity">
    <text evidence="1">Belongs to the RNase HII family.</text>
</comment>
<keyword id="KW-0963">Cytoplasm</keyword>
<keyword id="KW-0255">Endonuclease</keyword>
<keyword id="KW-0378">Hydrolase</keyword>
<keyword id="KW-0464">Manganese</keyword>
<keyword id="KW-0479">Metal-binding</keyword>
<keyword id="KW-0540">Nuclease</keyword>
<keyword id="KW-1185">Reference proteome</keyword>
<feature type="chain" id="PRO_0000334954" description="Ribonuclease HII">
    <location>
        <begin position="1"/>
        <end position="206"/>
    </location>
</feature>
<feature type="domain" description="RNase H type-2" evidence="2">
    <location>
        <begin position="18"/>
        <end position="206"/>
    </location>
</feature>
<feature type="binding site" evidence="1">
    <location>
        <position position="24"/>
    </location>
    <ligand>
        <name>a divalent metal cation</name>
        <dbReference type="ChEBI" id="CHEBI:60240"/>
    </ligand>
</feature>
<feature type="binding site" evidence="1">
    <location>
        <position position="25"/>
    </location>
    <ligand>
        <name>a divalent metal cation</name>
        <dbReference type="ChEBI" id="CHEBI:60240"/>
    </ligand>
</feature>
<feature type="binding site" evidence="1">
    <location>
        <position position="116"/>
    </location>
    <ligand>
        <name>a divalent metal cation</name>
        <dbReference type="ChEBI" id="CHEBI:60240"/>
    </ligand>
</feature>
<evidence type="ECO:0000255" key="1">
    <source>
        <dbReference type="HAMAP-Rule" id="MF_00052"/>
    </source>
</evidence>
<evidence type="ECO:0000255" key="2">
    <source>
        <dbReference type="PROSITE-ProRule" id="PRU01319"/>
    </source>
</evidence>
<reference key="1">
    <citation type="submission" date="2006-12" db="EMBL/GenBank/DDBJ databases">
        <title>Complete sequence of Shewanella amazonensis SB2B.</title>
        <authorList>
            <consortium name="US DOE Joint Genome Institute"/>
            <person name="Copeland A."/>
            <person name="Lucas S."/>
            <person name="Lapidus A."/>
            <person name="Barry K."/>
            <person name="Detter J.C."/>
            <person name="Glavina del Rio T."/>
            <person name="Hammon N."/>
            <person name="Israni S."/>
            <person name="Dalin E."/>
            <person name="Tice H."/>
            <person name="Pitluck S."/>
            <person name="Munk A.C."/>
            <person name="Brettin T."/>
            <person name="Bruce D."/>
            <person name="Han C."/>
            <person name="Tapia R."/>
            <person name="Gilna P."/>
            <person name="Schmutz J."/>
            <person name="Larimer F."/>
            <person name="Land M."/>
            <person name="Hauser L."/>
            <person name="Kyrpides N."/>
            <person name="Mikhailova N."/>
            <person name="Fredrickson J."/>
            <person name="Richardson P."/>
        </authorList>
    </citation>
    <scope>NUCLEOTIDE SEQUENCE [LARGE SCALE GENOMIC DNA]</scope>
    <source>
        <strain>ATCC BAA-1098 / SB2B</strain>
    </source>
</reference>
<dbReference type="EC" id="3.1.26.4" evidence="1"/>
<dbReference type="EMBL" id="CP000507">
    <property type="protein sequence ID" value="ABL99360.1"/>
    <property type="molecule type" value="Genomic_DNA"/>
</dbReference>
<dbReference type="RefSeq" id="WP_011759269.1">
    <property type="nucleotide sequence ID" value="NC_008700.1"/>
</dbReference>
<dbReference type="SMR" id="A1S4Q4"/>
<dbReference type="STRING" id="326297.Sama_1153"/>
<dbReference type="KEGG" id="saz:Sama_1153"/>
<dbReference type="eggNOG" id="COG0164">
    <property type="taxonomic scope" value="Bacteria"/>
</dbReference>
<dbReference type="HOGENOM" id="CLU_036532_3_2_6"/>
<dbReference type="OrthoDB" id="9803420at2"/>
<dbReference type="Proteomes" id="UP000009175">
    <property type="component" value="Chromosome"/>
</dbReference>
<dbReference type="GO" id="GO:0005737">
    <property type="term" value="C:cytoplasm"/>
    <property type="evidence" value="ECO:0007669"/>
    <property type="project" value="UniProtKB-SubCell"/>
</dbReference>
<dbReference type="GO" id="GO:0032299">
    <property type="term" value="C:ribonuclease H2 complex"/>
    <property type="evidence" value="ECO:0007669"/>
    <property type="project" value="TreeGrafter"/>
</dbReference>
<dbReference type="GO" id="GO:0030145">
    <property type="term" value="F:manganese ion binding"/>
    <property type="evidence" value="ECO:0007669"/>
    <property type="project" value="UniProtKB-UniRule"/>
</dbReference>
<dbReference type="GO" id="GO:0003723">
    <property type="term" value="F:RNA binding"/>
    <property type="evidence" value="ECO:0007669"/>
    <property type="project" value="InterPro"/>
</dbReference>
<dbReference type="GO" id="GO:0004523">
    <property type="term" value="F:RNA-DNA hybrid ribonuclease activity"/>
    <property type="evidence" value="ECO:0007669"/>
    <property type="project" value="UniProtKB-UniRule"/>
</dbReference>
<dbReference type="GO" id="GO:0043137">
    <property type="term" value="P:DNA replication, removal of RNA primer"/>
    <property type="evidence" value="ECO:0007669"/>
    <property type="project" value="TreeGrafter"/>
</dbReference>
<dbReference type="GO" id="GO:0006298">
    <property type="term" value="P:mismatch repair"/>
    <property type="evidence" value="ECO:0007669"/>
    <property type="project" value="TreeGrafter"/>
</dbReference>
<dbReference type="CDD" id="cd07182">
    <property type="entry name" value="RNase_HII_bacteria_HII_like"/>
    <property type="match status" value="1"/>
</dbReference>
<dbReference type="FunFam" id="3.30.420.10:FF:000006">
    <property type="entry name" value="Ribonuclease HII"/>
    <property type="match status" value="1"/>
</dbReference>
<dbReference type="Gene3D" id="3.30.420.10">
    <property type="entry name" value="Ribonuclease H-like superfamily/Ribonuclease H"/>
    <property type="match status" value="1"/>
</dbReference>
<dbReference type="HAMAP" id="MF_00052_B">
    <property type="entry name" value="RNase_HII_B"/>
    <property type="match status" value="1"/>
</dbReference>
<dbReference type="InterPro" id="IPR022898">
    <property type="entry name" value="RNase_HII"/>
</dbReference>
<dbReference type="InterPro" id="IPR001352">
    <property type="entry name" value="RNase_HII/HIII"/>
</dbReference>
<dbReference type="InterPro" id="IPR024567">
    <property type="entry name" value="RNase_HII/HIII_dom"/>
</dbReference>
<dbReference type="InterPro" id="IPR012337">
    <property type="entry name" value="RNaseH-like_sf"/>
</dbReference>
<dbReference type="InterPro" id="IPR036397">
    <property type="entry name" value="RNaseH_sf"/>
</dbReference>
<dbReference type="NCBIfam" id="NF000594">
    <property type="entry name" value="PRK00015.1-1"/>
    <property type="match status" value="1"/>
</dbReference>
<dbReference type="NCBIfam" id="NF000595">
    <property type="entry name" value="PRK00015.1-3"/>
    <property type="match status" value="1"/>
</dbReference>
<dbReference type="NCBIfam" id="NF000596">
    <property type="entry name" value="PRK00015.1-4"/>
    <property type="match status" value="1"/>
</dbReference>
<dbReference type="PANTHER" id="PTHR10954">
    <property type="entry name" value="RIBONUCLEASE H2 SUBUNIT A"/>
    <property type="match status" value="1"/>
</dbReference>
<dbReference type="PANTHER" id="PTHR10954:SF18">
    <property type="entry name" value="RIBONUCLEASE HII"/>
    <property type="match status" value="1"/>
</dbReference>
<dbReference type="Pfam" id="PF01351">
    <property type="entry name" value="RNase_HII"/>
    <property type="match status" value="1"/>
</dbReference>
<dbReference type="SUPFAM" id="SSF53098">
    <property type="entry name" value="Ribonuclease H-like"/>
    <property type="match status" value="1"/>
</dbReference>
<dbReference type="PROSITE" id="PS51975">
    <property type="entry name" value="RNASE_H_2"/>
    <property type="match status" value="1"/>
</dbReference>
<gene>
    <name evidence="1" type="primary">rnhB</name>
    <name type="ordered locus">Sama_1153</name>
</gene>